<comment type="function">
    <text evidence="1">Negatively regulates transcription of bacterial ribonucleotide reductase nrd genes and operons by binding to NrdR-boxes.</text>
</comment>
<comment type="cofactor">
    <cofactor evidence="1">
        <name>Zn(2+)</name>
        <dbReference type="ChEBI" id="CHEBI:29105"/>
    </cofactor>
    <text evidence="1">Binds 1 zinc ion.</text>
</comment>
<comment type="similarity">
    <text evidence="1">Belongs to the NrdR family.</text>
</comment>
<protein>
    <recommendedName>
        <fullName evidence="1">Transcriptional repressor NrdR</fullName>
    </recommendedName>
</protein>
<gene>
    <name evidence="1" type="primary">nrdR</name>
    <name type="ordered locus">Fnod_1156</name>
</gene>
<feature type="chain" id="PRO_1000080752" description="Transcriptional repressor NrdR">
    <location>
        <begin position="1"/>
        <end position="153"/>
    </location>
</feature>
<feature type="domain" description="ATP-cone" evidence="1">
    <location>
        <begin position="49"/>
        <end position="139"/>
    </location>
</feature>
<feature type="zinc finger region" evidence="1">
    <location>
        <begin position="3"/>
        <end position="34"/>
    </location>
</feature>
<name>NRDR_FERNB</name>
<evidence type="ECO:0000255" key="1">
    <source>
        <dbReference type="HAMAP-Rule" id="MF_00440"/>
    </source>
</evidence>
<sequence>MRCPFCGYEDTRVLDSRELSEGRAIRRRRECPQCHARFTTYERYETGPITVIKKDGRREKFDRKKILNGLLKAFEKRPITVDDMERIVDNIVSQLQKSGTLEVPSELIGKLVMEELRKVDQVAYVRFASVYKDFREIDQFIEVIKELRNEGQI</sequence>
<organism>
    <name type="scientific">Fervidobacterium nodosum (strain ATCC 35602 / DSM 5306 / Rt17-B1)</name>
    <dbReference type="NCBI Taxonomy" id="381764"/>
    <lineage>
        <taxon>Bacteria</taxon>
        <taxon>Thermotogati</taxon>
        <taxon>Thermotogota</taxon>
        <taxon>Thermotogae</taxon>
        <taxon>Thermotogales</taxon>
        <taxon>Fervidobacteriaceae</taxon>
        <taxon>Fervidobacterium</taxon>
    </lineage>
</organism>
<proteinExistence type="inferred from homology"/>
<accession>A7HM70</accession>
<dbReference type="EMBL" id="CP000771">
    <property type="protein sequence ID" value="ABS61003.1"/>
    <property type="molecule type" value="Genomic_DNA"/>
</dbReference>
<dbReference type="RefSeq" id="WP_011994316.1">
    <property type="nucleotide sequence ID" value="NC_009718.1"/>
</dbReference>
<dbReference type="SMR" id="A7HM70"/>
<dbReference type="STRING" id="381764.Fnod_1156"/>
<dbReference type="KEGG" id="fno:Fnod_1156"/>
<dbReference type="eggNOG" id="COG1327">
    <property type="taxonomic scope" value="Bacteria"/>
</dbReference>
<dbReference type="HOGENOM" id="CLU_108412_0_0_0"/>
<dbReference type="OrthoDB" id="9807461at2"/>
<dbReference type="Proteomes" id="UP000002415">
    <property type="component" value="Chromosome"/>
</dbReference>
<dbReference type="GO" id="GO:0005524">
    <property type="term" value="F:ATP binding"/>
    <property type="evidence" value="ECO:0007669"/>
    <property type="project" value="UniProtKB-KW"/>
</dbReference>
<dbReference type="GO" id="GO:0003677">
    <property type="term" value="F:DNA binding"/>
    <property type="evidence" value="ECO:0007669"/>
    <property type="project" value="UniProtKB-KW"/>
</dbReference>
<dbReference type="GO" id="GO:0008270">
    <property type="term" value="F:zinc ion binding"/>
    <property type="evidence" value="ECO:0007669"/>
    <property type="project" value="UniProtKB-UniRule"/>
</dbReference>
<dbReference type="GO" id="GO:0045892">
    <property type="term" value="P:negative regulation of DNA-templated transcription"/>
    <property type="evidence" value="ECO:0007669"/>
    <property type="project" value="UniProtKB-UniRule"/>
</dbReference>
<dbReference type="HAMAP" id="MF_00440">
    <property type="entry name" value="NrdR"/>
    <property type="match status" value="1"/>
</dbReference>
<dbReference type="InterPro" id="IPR005144">
    <property type="entry name" value="ATP-cone_dom"/>
</dbReference>
<dbReference type="InterPro" id="IPR055173">
    <property type="entry name" value="NrdR-like_N"/>
</dbReference>
<dbReference type="InterPro" id="IPR003796">
    <property type="entry name" value="RNR_NrdR-like"/>
</dbReference>
<dbReference type="NCBIfam" id="TIGR00244">
    <property type="entry name" value="transcriptional regulator NrdR"/>
    <property type="match status" value="1"/>
</dbReference>
<dbReference type="PANTHER" id="PTHR30455">
    <property type="entry name" value="TRANSCRIPTIONAL REPRESSOR NRDR"/>
    <property type="match status" value="1"/>
</dbReference>
<dbReference type="PANTHER" id="PTHR30455:SF2">
    <property type="entry name" value="TRANSCRIPTIONAL REPRESSOR NRDR"/>
    <property type="match status" value="1"/>
</dbReference>
<dbReference type="Pfam" id="PF03477">
    <property type="entry name" value="ATP-cone"/>
    <property type="match status" value="1"/>
</dbReference>
<dbReference type="Pfam" id="PF22811">
    <property type="entry name" value="Zn_ribbon_NrdR"/>
    <property type="match status" value="1"/>
</dbReference>
<dbReference type="PROSITE" id="PS51161">
    <property type="entry name" value="ATP_CONE"/>
    <property type="match status" value="1"/>
</dbReference>
<keyword id="KW-0067">ATP-binding</keyword>
<keyword id="KW-0238">DNA-binding</keyword>
<keyword id="KW-0479">Metal-binding</keyword>
<keyword id="KW-0547">Nucleotide-binding</keyword>
<keyword id="KW-1185">Reference proteome</keyword>
<keyword id="KW-0678">Repressor</keyword>
<keyword id="KW-0804">Transcription</keyword>
<keyword id="KW-0805">Transcription regulation</keyword>
<keyword id="KW-0862">Zinc</keyword>
<keyword id="KW-0863">Zinc-finger</keyword>
<reference key="1">
    <citation type="submission" date="2007-07" db="EMBL/GenBank/DDBJ databases">
        <title>Complete sequence of Fervidobacterium nodosum Rt17-B1.</title>
        <authorList>
            <consortium name="US DOE Joint Genome Institute"/>
            <person name="Copeland A."/>
            <person name="Lucas S."/>
            <person name="Lapidus A."/>
            <person name="Barry K."/>
            <person name="Glavina del Rio T."/>
            <person name="Dalin E."/>
            <person name="Tice H."/>
            <person name="Pitluck S."/>
            <person name="Saunders E."/>
            <person name="Brettin T."/>
            <person name="Bruce D."/>
            <person name="Detter J.C."/>
            <person name="Han C."/>
            <person name="Schmutz J."/>
            <person name="Larimer F."/>
            <person name="Land M."/>
            <person name="Hauser L."/>
            <person name="Kyrpides N."/>
            <person name="Mikhailova N."/>
            <person name="Nelson K."/>
            <person name="Gogarten J.P."/>
            <person name="Noll K."/>
            <person name="Richardson P."/>
        </authorList>
    </citation>
    <scope>NUCLEOTIDE SEQUENCE [LARGE SCALE GENOMIC DNA]</scope>
    <source>
        <strain>ATCC 35602 / DSM 5306 / Rt17-B1</strain>
    </source>
</reference>